<protein>
    <recommendedName>
        <fullName>ADP-ribosylation factor-like protein 3</fullName>
    </recommendedName>
</protein>
<organism>
    <name type="scientific">Danio rerio</name>
    <name type="common">Zebrafish</name>
    <name type="synonym">Brachydanio rerio</name>
    <dbReference type="NCBI Taxonomy" id="7955"/>
    <lineage>
        <taxon>Eukaryota</taxon>
        <taxon>Metazoa</taxon>
        <taxon>Chordata</taxon>
        <taxon>Craniata</taxon>
        <taxon>Vertebrata</taxon>
        <taxon>Euteleostomi</taxon>
        <taxon>Actinopterygii</taxon>
        <taxon>Neopterygii</taxon>
        <taxon>Teleostei</taxon>
        <taxon>Ostariophysi</taxon>
        <taxon>Cypriniformes</taxon>
        <taxon>Danionidae</taxon>
        <taxon>Danioninae</taxon>
        <taxon>Danio</taxon>
    </lineage>
</organism>
<dbReference type="EMBL" id="AL928692">
    <property type="protein sequence ID" value="CAK04459.1"/>
    <property type="molecule type" value="Genomic_DNA"/>
</dbReference>
<dbReference type="EMBL" id="BC124704">
    <property type="protein sequence ID" value="AAI24705.1"/>
    <property type="molecule type" value="mRNA"/>
</dbReference>
<dbReference type="RefSeq" id="NP_001038373.1">
    <property type="nucleotide sequence ID" value="NM_001044908.2"/>
</dbReference>
<dbReference type="SMR" id="Q1MTE5"/>
<dbReference type="FunCoup" id="Q1MTE5">
    <property type="interactions" value="724"/>
</dbReference>
<dbReference type="STRING" id="7955.ENSDARP00000096322"/>
<dbReference type="PaxDb" id="7955-ENSDARP00000096322"/>
<dbReference type="Ensembl" id="ENSDART00000105545">
    <property type="protein sequence ID" value="ENSDARP00000096322"/>
    <property type="gene ID" value="ENSDARG00000071409"/>
</dbReference>
<dbReference type="GeneID" id="797451"/>
<dbReference type="KEGG" id="dre:797451"/>
<dbReference type="AGR" id="ZFIN:ZDB-GENE-030131-7518"/>
<dbReference type="CTD" id="797451"/>
<dbReference type="ZFIN" id="ZDB-GENE-030131-7518">
    <property type="gene designation" value="arl3b"/>
</dbReference>
<dbReference type="eggNOG" id="KOG0074">
    <property type="taxonomic scope" value="Eukaryota"/>
</dbReference>
<dbReference type="HOGENOM" id="CLU_040729_12_0_1"/>
<dbReference type="InParanoid" id="Q1MTE5"/>
<dbReference type="OMA" id="QEDISHM"/>
<dbReference type="OrthoDB" id="2011769at2759"/>
<dbReference type="PhylomeDB" id="Q1MTE5"/>
<dbReference type="TreeFam" id="TF105463"/>
<dbReference type="Reactome" id="R-DRE-5624138">
    <property type="pathway name" value="Trafficking of myristoylated proteins to the cilium"/>
</dbReference>
<dbReference type="PRO" id="PR:Q1MTE5"/>
<dbReference type="Proteomes" id="UP000000437">
    <property type="component" value="Alternate scaffold 12"/>
</dbReference>
<dbReference type="Proteomes" id="UP000000437">
    <property type="component" value="Chromosome 12"/>
</dbReference>
<dbReference type="Bgee" id="ENSDARG00000071409">
    <property type="expression patterns" value="Expressed in swim bladder and 28 other cell types or tissues"/>
</dbReference>
<dbReference type="ExpressionAtlas" id="Q1MTE5">
    <property type="expression patterns" value="baseline and differential"/>
</dbReference>
<dbReference type="GO" id="GO:0005813">
    <property type="term" value="C:centrosome"/>
    <property type="evidence" value="ECO:0000250"/>
    <property type="project" value="UniProtKB"/>
</dbReference>
<dbReference type="GO" id="GO:0005929">
    <property type="term" value="C:cilium"/>
    <property type="evidence" value="ECO:0000250"/>
    <property type="project" value="UniProtKB"/>
</dbReference>
<dbReference type="GO" id="GO:0005737">
    <property type="term" value="C:cytoplasm"/>
    <property type="evidence" value="ECO:0000318"/>
    <property type="project" value="GO_Central"/>
</dbReference>
<dbReference type="GO" id="GO:0005881">
    <property type="term" value="C:cytoplasmic microtubule"/>
    <property type="evidence" value="ECO:0000250"/>
    <property type="project" value="UniProtKB"/>
</dbReference>
<dbReference type="GO" id="GO:0005794">
    <property type="term" value="C:Golgi apparatus"/>
    <property type="evidence" value="ECO:0000250"/>
    <property type="project" value="UniProtKB"/>
</dbReference>
<dbReference type="GO" id="GO:0000139">
    <property type="term" value="C:Golgi membrane"/>
    <property type="evidence" value="ECO:0007669"/>
    <property type="project" value="UniProtKB-SubCell"/>
</dbReference>
<dbReference type="GO" id="GO:0015630">
    <property type="term" value="C:microtubule cytoskeleton"/>
    <property type="evidence" value="ECO:0000318"/>
    <property type="project" value="GO_Central"/>
</dbReference>
<dbReference type="GO" id="GO:0030496">
    <property type="term" value="C:midbody"/>
    <property type="evidence" value="ECO:0000250"/>
    <property type="project" value="UniProtKB"/>
</dbReference>
<dbReference type="GO" id="GO:0005634">
    <property type="term" value="C:nucleus"/>
    <property type="evidence" value="ECO:0000250"/>
    <property type="project" value="UniProtKB"/>
</dbReference>
<dbReference type="GO" id="GO:0032391">
    <property type="term" value="C:photoreceptor connecting cilium"/>
    <property type="evidence" value="ECO:0000250"/>
    <property type="project" value="UniProtKB"/>
</dbReference>
<dbReference type="GO" id="GO:0005876">
    <property type="term" value="C:spindle microtubule"/>
    <property type="evidence" value="ECO:0000250"/>
    <property type="project" value="UniProtKB"/>
</dbReference>
<dbReference type="GO" id="GO:0019003">
    <property type="term" value="F:GDP binding"/>
    <property type="evidence" value="ECO:0000250"/>
    <property type="project" value="UniProtKB"/>
</dbReference>
<dbReference type="GO" id="GO:0005525">
    <property type="term" value="F:GTP binding"/>
    <property type="evidence" value="ECO:0000250"/>
    <property type="project" value="UniProtKB"/>
</dbReference>
<dbReference type="GO" id="GO:0003924">
    <property type="term" value="F:GTPase activity"/>
    <property type="evidence" value="ECO:0000250"/>
    <property type="project" value="UniProtKB"/>
</dbReference>
<dbReference type="GO" id="GO:0008017">
    <property type="term" value="F:microtubule binding"/>
    <property type="evidence" value="ECO:0000250"/>
    <property type="project" value="UniProtKB"/>
</dbReference>
<dbReference type="GO" id="GO:0060271">
    <property type="term" value="P:cilium assembly"/>
    <property type="evidence" value="ECO:0000315"/>
    <property type="project" value="UniProtKB"/>
</dbReference>
<dbReference type="GO" id="GO:0000281">
    <property type="term" value="P:mitotic cytokinesis"/>
    <property type="evidence" value="ECO:0000250"/>
    <property type="project" value="UniProtKB"/>
</dbReference>
<dbReference type="GO" id="GO:0015031">
    <property type="term" value="P:protein transport"/>
    <property type="evidence" value="ECO:0007669"/>
    <property type="project" value="UniProtKB-KW"/>
</dbReference>
<dbReference type="CDD" id="cd04155">
    <property type="entry name" value="Arl3"/>
    <property type="match status" value="1"/>
</dbReference>
<dbReference type="FunFam" id="3.40.50.300:FF:000281">
    <property type="entry name" value="ADP-ribosylation factor-like protein 3"/>
    <property type="match status" value="1"/>
</dbReference>
<dbReference type="Gene3D" id="3.40.50.300">
    <property type="entry name" value="P-loop containing nucleotide triphosphate hydrolases"/>
    <property type="match status" value="1"/>
</dbReference>
<dbReference type="InterPro" id="IPR044612">
    <property type="entry name" value="ARL2/3"/>
</dbReference>
<dbReference type="InterPro" id="IPR027417">
    <property type="entry name" value="P-loop_NTPase"/>
</dbReference>
<dbReference type="InterPro" id="IPR005225">
    <property type="entry name" value="Small_GTP-bd"/>
</dbReference>
<dbReference type="InterPro" id="IPR006689">
    <property type="entry name" value="Small_GTPase_ARF/SAR"/>
</dbReference>
<dbReference type="NCBIfam" id="TIGR00231">
    <property type="entry name" value="small_GTP"/>
    <property type="match status" value="1"/>
</dbReference>
<dbReference type="PANTHER" id="PTHR45697">
    <property type="entry name" value="ADP-RIBOSYLATION FACTOR-LIKE PROTEIN 2-RELATED"/>
    <property type="match status" value="1"/>
</dbReference>
<dbReference type="Pfam" id="PF00025">
    <property type="entry name" value="Arf"/>
    <property type="match status" value="1"/>
</dbReference>
<dbReference type="PRINTS" id="PR00328">
    <property type="entry name" value="SAR1GTPBP"/>
</dbReference>
<dbReference type="SMART" id="SM00177">
    <property type="entry name" value="ARF"/>
    <property type="match status" value="1"/>
</dbReference>
<dbReference type="SMART" id="SM00175">
    <property type="entry name" value="RAB"/>
    <property type="match status" value="1"/>
</dbReference>
<dbReference type="SMART" id="SM00178">
    <property type="entry name" value="SAR"/>
    <property type="match status" value="1"/>
</dbReference>
<dbReference type="SUPFAM" id="SSF52540">
    <property type="entry name" value="P-loop containing nucleoside triphosphate hydrolases"/>
    <property type="match status" value="1"/>
</dbReference>
<dbReference type="PROSITE" id="PS51417">
    <property type="entry name" value="ARF"/>
    <property type="match status" value="1"/>
</dbReference>
<name>ARL3_DANRE</name>
<proteinExistence type="evidence at transcript level"/>
<evidence type="ECO:0000250" key="1"/>
<evidence type="ECO:0000255" key="2"/>
<evidence type="ECO:0000305" key="3"/>
<feature type="initiator methionine" description="Removed" evidence="2">
    <location>
        <position position="1"/>
    </location>
</feature>
<feature type="chain" id="PRO_0000356300" description="ADP-ribosylation factor-like protein 3">
    <location>
        <begin position="2"/>
        <end position="182"/>
    </location>
</feature>
<feature type="binding site" evidence="1">
    <location>
        <begin position="24"/>
        <end position="31"/>
    </location>
    <ligand>
        <name>GTP</name>
        <dbReference type="ChEBI" id="CHEBI:37565"/>
    </ligand>
</feature>
<feature type="binding site" evidence="1">
    <location>
        <begin position="67"/>
        <end position="71"/>
    </location>
    <ligand>
        <name>GTP</name>
        <dbReference type="ChEBI" id="CHEBI:37565"/>
    </ligand>
</feature>
<feature type="binding site" evidence="1">
    <location>
        <begin position="126"/>
        <end position="129"/>
    </location>
    <ligand>
        <name>GTP</name>
        <dbReference type="ChEBI" id="CHEBI:37565"/>
    </ligand>
</feature>
<feature type="lipid moiety-binding region" description="N-myristoyl glycine" evidence="2">
    <location>
        <position position="2"/>
    </location>
</feature>
<sequence length="182" mass="20426">MGLLSILRKLKSTPDQEVRILLLGLDNGGKTTLLKQLASEDITHITPTQGFNIKSVQSQGFKLNVWDIGGQRKIRPYWRNYFENTDVLIYVIDSADRKRFEETGQELAELLDEEKLSGVPVLVFANKQDLLTAAPASEIAEGLNLHTIRDRVWQIQSCSALTGEGVQDGMNWVCKSVNAKRK</sequence>
<accession>Q1MTE5</accession>
<comment type="function">
    <text evidence="1">Small GTP-binding protein which cycles between an inactive GDP-bound and an active GTP-bound form, and the rate of cycling is regulated by guanine nucleotide exchange factors (GEF) and GTPase-activating proteins (GAP). Required for normal cytokinesis and cilia signaling. Required for targeting proteins to the ciliary membrane by releasing myristoylated protein from unc119 cargo adapters into the cilium (By similarity).</text>
</comment>
<comment type="subcellular location">
    <subcellularLocation>
        <location evidence="1">Golgi apparatus membrane</location>
        <topology evidence="1">Peripheral membrane protein</topology>
        <orientation evidence="1">Cytoplasmic side</orientation>
    </subcellularLocation>
    <subcellularLocation>
        <location evidence="1">Cytoplasm</location>
        <location evidence="1">Cytoskeleton</location>
        <location evidence="1">Spindle</location>
    </subcellularLocation>
    <subcellularLocation>
        <location evidence="1">Nucleus</location>
    </subcellularLocation>
    <subcellularLocation>
        <location evidence="1">Cytoplasm</location>
        <location evidence="1">Cytoskeleton</location>
        <location evidence="1">Microtubule organizing center</location>
        <location evidence="1">Centrosome</location>
    </subcellularLocation>
    <subcellularLocation>
        <location evidence="1">Cytoplasm</location>
    </subcellularLocation>
    <subcellularLocation>
        <location evidence="1">Cell projection</location>
        <location evidence="1">Cilium</location>
    </subcellularLocation>
    <text evidence="1">Detected predominantly in the photoreceptor connecting cilium. Centrosome-associated throughout the cell cycle. Not detected to interphase microtubules. Present on the mitotic spindle (By similarity).</text>
</comment>
<comment type="similarity">
    <text evidence="3">Belongs to the small GTPase superfamily. Arf family.</text>
</comment>
<keyword id="KW-0131">Cell cycle</keyword>
<keyword id="KW-0132">Cell division</keyword>
<keyword id="KW-0966">Cell projection</keyword>
<keyword id="KW-0963">Cytoplasm</keyword>
<keyword id="KW-0206">Cytoskeleton</keyword>
<keyword id="KW-0333">Golgi apparatus</keyword>
<keyword id="KW-0342">GTP-binding</keyword>
<keyword id="KW-0449">Lipoprotein</keyword>
<keyword id="KW-0472">Membrane</keyword>
<keyword id="KW-0519">Myristate</keyword>
<keyword id="KW-0547">Nucleotide-binding</keyword>
<keyword id="KW-0539">Nucleus</keyword>
<keyword id="KW-0653">Protein transport</keyword>
<keyword id="KW-1185">Reference proteome</keyword>
<keyword id="KW-0813">Transport</keyword>
<gene>
    <name type="primary">arl3</name>
    <name type="synonym">sfxn2</name>
    <name type="ORF">si:ch211-208d15.4</name>
</gene>
<reference key="1">
    <citation type="journal article" date="2013" name="Nature">
        <title>The zebrafish reference genome sequence and its relationship to the human genome.</title>
        <authorList>
            <person name="Howe K."/>
            <person name="Clark M.D."/>
            <person name="Torroja C.F."/>
            <person name="Torrance J."/>
            <person name="Berthelot C."/>
            <person name="Muffato M."/>
            <person name="Collins J.E."/>
            <person name="Humphray S."/>
            <person name="McLaren K."/>
            <person name="Matthews L."/>
            <person name="McLaren S."/>
            <person name="Sealy I."/>
            <person name="Caccamo M."/>
            <person name="Churcher C."/>
            <person name="Scott C."/>
            <person name="Barrett J.C."/>
            <person name="Koch R."/>
            <person name="Rauch G.J."/>
            <person name="White S."/>
            <person name="Chow W."/>
            <person name="Kilian B."/>
            <person name="Quintais L.T."/>
            <person name="Guerra-Assuncao J.A."/>
            <person name="Zhou Y."/>
            <person name="Gu Y."/>
            <person name="Yen J."/>
            <person name="Vogel J.H."/>
            <person name="Eyre T."/>
            <person name="Redmond S."/>
            <person name="Banerjee R."/>
            <person name="Chi J."/>
            <person name="Fu B."/>
            <person name="Langley E."/>
            <person name="Maguire S.F."/>
            <person name="Laird G.K."/>
            <person name="Lloyd D."/>
            <person name="Kenyon E."/>
            <person name="Donaldson S."/>
            <person name="Sehra H."/>
            <person name="Almeida-King J."/>
            <person name="Loveland J."/>
            <person name="Trevanion S."/>
            <person name="Jones M."/>
            <person name="Quail M."/>
            <person name="Willey D."/>
            <person name="Hunt A."/>
            <person name="Burton J."/>
            <person name="Sims S."/>
            <person name="McLay K."/>
            <person name="Plumb B."/>
            <person name="Davis J."/>
            <person name="Clee C."/>
            <person name="Oliver K."/>
            <person name="Clark R."/>
            <person name="Riddle C."/>
            <person name="Elliot D."/>
            <person name="Threadgold G."/>
            <person name="Harden G."/>
            <person name="Ware D."/>
            <person name="Begum S."/>
            <person name="Mortimore B."/>
            <person name="Kerry G."/>
            <person name="Heath P."/>
            <person name="Phillimore B."/>
            <person name="Tracey A."/>
            <person name="Corby N."/>
            <person name="Dunn M."/>
            <person name="Johnson C."/>
            <person name="Wood J."/>
            <person name="Clark S."/>
            <person name="Pelan S."/>
            <person name="Griffiths G."/>
            <person name="Smith M."/>
            <person name="Glithero R."/>
            <person name="Howden P."/>
            <person name="Barker N."/>
            <person name="Lloyd C."/>
            <person name="Stevens C."/>
            <person name="Harley J."/>
            <person name="Holt K."/>
            <person name="Panagiotidis G."/>
            <person name="Lovell J."/>
            <person name="Beasley H."/>
            <person name="Henderson C."/>
            <person name="Gordon D."/>
            <person name="Auger K."/>
            <person name="Wright D."/>
            <person name="Collins J."/>
            <person name="Raisen C."/>
            <person name="Dyer L."/>
            <person name="Leung K."/>
            <person name="Robertson L."/>
            <person name="Ambridge K."/>
            <person name="Leongamornlert D."/>
            <person name="McGuire S."/>
            <person name="Gilderthorp R."/>
            <person name="Griffiths C."/>
            <person name="Manthravadi D."/>
            <person name="Nichol S."/>
            <person name="Barker G."/>
            <person name="Whitehead S."/>
            <person name="Kay M."/>
            <person name="Brown J."/>
            <person name="Murnane C."/>
            <person name="Gray E."/>
            <person name="Humphries M."/>
            <person name="Sycamore N."/>
            <person name="Barker D."/>
            <person name="Saunders D."/>
            <person name="Wallis J."/>
            <person name="Babbage A."/>
            <person name="Hammond S."/>
            <person name="Mashreghi-Mohammadi M."/>
            <person name="Barr L."/>
            <person name="Martin S."/>
            <person name="Wray P."/>
            <person name="Ellington A."/>
            <person name="Matthews N."/>
            <person name="Ellwood M."/>
            <person name="Woodmansey R."/>
            <person name="Clark G."/>
            <person name="Cooper J."/>
            <person name="Tromans A."/>
            <person name="Grafham D."/>
            <person name="Skuce C."/>
            <person name="Pandian R."/>
            <person name="Andrews R."/>
            <person name="Harrison E."/>
            <person name="Kimberley A."/>
            <person name="Garnett J."/>
            <person name="Fosker N."/>
            <person name="Hall R."/>
            <person name="Garner P."/>
            <person name="Kelly D."/>
            <person name="Bird C."/>
            <person name="Palmer S."/>
            <person name="Gehring I."/>
            <person name="Berger A."/>
            <person name="Dooley C.M."/>
            <person name="Ersan-Urun Z."/>
            <person name="Eser C."/>
            <person name="Geiger H."/>
            <person name="Geisler M."/>
            <person name="Karotki L."/>
            <person name="Kirn A."/>
            <person name="Konantz J."/>
            <person name="Konantz M."/>
            <person name="Oberlander M."/>
            <person name="Rudolph-Geiger S."/>
            <person name="Teucke M."/>
            <person name="Lanz C."/>
            <person name="Raddatz G."/>
            <person name="Osoegawa K."/>
            <person name="Zhu B."/>
            <person name="Rapp A."/>
            <person name="Widaa S."/>
            <person name="Langford C."/>
            <person name="Yang F."/>
            <person name="Schuster S.C."/>
            <person name="Carter N.P."/>
            <person name="Harrow J."/>
            <person name="Ning Z."/>
            <person name="Herrero J."/>
            <person name="Searle S.M."/>
            <person name="Enright A."/>
            <person name="Geisler R."/>
            <person name="Plasterk R.H."/>
            <person name="Lee C."/>
            <person name="Westerfield M."/>
            <person name="de Jong P.J."/>
            <person name="Zon L.I."/>
            <person name="Postlethwait J.H."/>
            <person name="Nusslein-Volhard C."/>
            <person name="Hubbard T.J."/>
            <person name="Roest Crollius H."/>
            <person name="Rogers J."/>
            <person name="Stemple D.L."/>
        </authorList>
    </citation>
    <scope>NUCLEOTIDE SEQUENCE [LARGE SCALE GENOMIC DNA]</scope>
    <source>
        <strain>Tuebingen</strain>
    </source>
</reference>
<reference key="2">
    <citation type="submission" date="2006-10" db="EMBL/GenBank/DDBJ databases">
        <authorList>
            <consortium name="NIH - Zebrafish Gene Collection (ZGC) project"/>
        </authorList>
    </citation>
    <scope>NUCLEOTIDE SEQUENCE [LARGE SCALE MRNA]</scope>
    <source>
        <tissue>Embryo</tissue>
    </source>
</reference>